<sequence>MFSRVRGFLSCQNYSHTATPAITLPSSGSANFAGVEYPLLPLDQHTPLLFQWFERNPSRFGENQIPIINTQQNPYLNNIINAAIIEKERTIGVLVDGNFSAGQKKALAKLEKQYENIKVIYNSDLDYSMYDKKLSDIYLENIAKIEAQPANVRDEYLLGEIKKSLNEVLKNNPEESLVSSHDKRLGHVRFDFYRNLFLLKGSNAFLEAGKHGCHHLQPGGGCIYLDADMLLTGKLGTLYLPDGIAVHVSRKGNSMSLENGIIAVNRSEHPALKKGLEIMHSKPYGDPYIDGVCGGLRHYFNCSIRHNYEEFCNFIEFKHEHIFMDTSSLTISSWR</sequence>
<dbReference type="EC" id="2.4.1.-" evidence="3 5 6 7 8 10 11"/>
<dbReference type="EMBL" id="FQ312003">
    <property type="protein sequence ID" value="CBW18025.1"/>
    <property type="molecule type" value="Genomic_DNA"/>
</dbReference>
<dbReference type="RefSeq" id="WP_000492926.1">
    <property type="nucleotide sequence ID" value="NZ_QASL01000003.1"/>
</dbReference>
<dbReference type="PDB" id="6CGI">
    <property type="method" value="X-ray"/>
    <property type="resolution" value="2.30 A"/>
    <property type="chains" value="A/B/C/D=25-335"/>
</dbReference>
<dbReference type="PDB" id="6DUS">
    <property type="method" value="X-ray"/>
    <property type="resolution" value="2.60 A"/>
    <property type="chains" value="A/B=26-335"/>
</dbReference>
<dbReference type="PDB" id="6EYR">
    <property type="method" value="X-ray"/>
    <property type="resolution" value="2.20 A"/>
    <property type="chains" value="A/B=14-333"/>
</dbReference>
<dbReference type="PDB" id="6EYT">
    <property type="method" value="X-ray"/>
    <property type="resolution" value="2.21 A"/>
    <property type="chains" value="A/B=14-335"/>
</dbReference>
<dbReference type="PDBsum" id="6CGI"/>
<dbReference type="PDBsum" id="6DUS"/>
<dbReference type="PDBsum" id="6EYR"/>
<dbReference type="PDBsum" id="6EYT"/>
<dbReference type="SMR" id="P0DUJ7"/>
<dbReference type="IntAct" id="P0DUJ7">
    <property type="interactions" value="2"/>
</dbReference>
<dbReference type="MINT" id="P0DUJ7"/>
<dbReference type="GlyCosmos" id="P0DUJ7">
    <property type="glycosylation" value="4 sites, No reported glycans"/>
</dbReference>
<dbReference type="KEGG" id="sey:SL1344_1928"/>
<dbReference type="PHI-base" id="PHI:11446"/>
<dbReference type="Proteomes" id="UP000008962">
    <property type="component" value="Chromosome"/>
</dbReference>
<dbReference type="GO" id="GO:0005576">
    <property type="term" value="C:extracellular region"/>
    <property type="evidence" value="ECO:0007669"/>
    <property type="project" value="UniProtKB-SubCell"/>
</dbReference>
<dbReference type="GO" id="GO:0043657">
    <property type="term" value="C:host cell"/>
    <property type="evidence" value="ECO:0000314"/>
    <property type="project" value="UniProtKB"/>
</dbReference>
<dbReference type="GO" id="GO:0044177">
    <property type="term" value="C:host cell Golgi apparatus"/>
    <property type="evidence" value="ECO:0000314"/>
    <property type="project" value="UniProtKB"/>
</dbReference>
<dbReference type="GO" id="GO:0008289">
    <property type="term" value="F:lipid binding"/>
    <property type="evidence" value="ECO:0000314"/>
    <property type="project" value="UniProtKB"/>
</dbReference>
<dbReference type="GO" id="GO:0030145">
    <property type="term" value="F:manganese ion binding"/>
    <property type="evidence" value="ECO:0000314"/>
    <property type="project" value="UniProtKB"/>
</dbReference>
<dbReference type="GO" id="GO:0106362">
    <property type="term" value="F:protein-arginine N-acetylglucosaminyltransferase activity"/>
    <property type="evidence" value="ECO:0000314"/>
    <property type="project" value="UniProtKB"/>
</dbReference>
<dbReference type="GO" id="GO:0090729">
    <property type="term" value="F:toxin activity"/>
    <property type="evidence" value="ECO:0007669"/>
    <property type="project" value="UniProtKB-KW"/>
</dbReference>
<dbReference type="GO" id="GO:0052040">
    <property type="term" value="P:symbiont-mediated perturbation of host programmed cell death"/>
    <property type="evidence" value="ECO:0000314"/>
    <property type="project" value="UniProtKB"/>
</dbReference>
<dbReference type="NCBIfam" id="NF011910">
    <property type="entry name" value="PRK15383.1"/>
    <property type="match status" value="1"/>
</dbReference>
<dbReference type="Pfam" id="PF24688">
    <property type="entry name" value="SseK_NleB"/>
    <property type="match status" value="1"/>
</dbReference>
<organism>
    <name type="scientific">Salmonella typhimurium (strain SL1344)</name>
    <dbReference type="NCBI Taxonomy" id="216597"/>
    <lineage>
        <taxon>Bacteria</taxon>
        <taxon>Pseudomonadati</taxon>
        <taxon>Pseudomonadota</taxon>
        <taxon>Gammaproteobacteria</taxon>
        <taxon>Enterobacterales</taxon>
        <taxon>Enterobacteriaceae</taxon>
        <taxon>Salmonella</taxon>
    </lineage>
</organism>
<protein>
    <recommendedName>
        <fullName evidence="14">Protein-arginine N-acetylglucosaminyltransferase SseK3</fullName>
        <shortName evidence="14">Arginine GlcNAcyltransferase SseK3</shortName>
        <ecNumber evidence="3 5 6 7 8 10 11">2.4.1.-</ecNumber>
    </recommendedName>
    <alternativeName>
        <fullName evidence="12">Salmonella secreted effector K3</fullName>
    </alternativeName>
</protein>
<feature type="chain" id="PRO_0000452601" description="Protein-arginine N-acetylglucosaminyltransferase SseK3">
    <location>
        <begin position="1"/>
        <end position="335"/>
    </location>
</feature>
<feature type="short sequence motif" description="DXD motif" evidence="14">
    <location>
        <begin position="226"/>
        <end position="228"/>
    </location>
</feature>
<feature type="active site" description="Proton acceptor" evidence="5 6">
    <location>
        <position position="258"/>
    </location>
</feature>
<feature type="binding site" evidence="15 16 18 20">
    <location>
        <begin position="51"/>
        <end position="53"/>
    </location>
    <ligand>
        <name>UDP-N-acetyl-alpha-D-glucosamine</name>
        <dbReference type="ChEBI" id="CHEBI:57705"/>
    </ligand>
</feature>
<feature type="binding site" evidence="15 16 18 20">
    <location>
        <position position="75"/>
    </location>
    <ligand>
        <name>UDP-N-acetyl-alpha-D-glucosamine</name>
        <dbReference type="ChEBI" id="CHEBI:57705"/>
    </ligand>
</feature>
<feature type="binding site" evidence="15 16 18 20">
    <location>
        <begin position="224"/>
        <end position="227"/>
    </location>
    <ligand>
        <name>UDP-N-acetyl-alpha-D-glucosamine</name>
        <dbReference type="ChEBI" id="CHEBI:57705"/>
    </ligand>
</feature>
<feature type="binding site" evidence="5 6 18 20">
    <location>
        <position position="228"/>
    </location>
    <ligand>
        <name>Mn(2+)</name>
        <dbReference type="ChEBI" id="CHEBI:29035"/>
    </ligand>
</feature>
<feature type="binding site" evidence="5 6 18 20">
    <location>
        <position position="325"/>
    </location>
    <ligand>
        <name>Mn(2+)</name>
        <dbReference type="ChEBI" id="CHEBI:29035"/>
    </ligand>
</feature>
<feature type="binding site" evidence="5 6 18 20">
    <location>
        <position position="327"/>
    </location>
    <ligand>
        <name>Mn(2+)</name>
        <dbReference type="ChEBI" id="CHEBI:29035"/>
    </ligand>
</feature>
<feature type="binding site" evidence="15 16 18 20">
    <location>
        <position position="327"/>
    </location>
    <ligand>
        <name>UDP-N-acetyl-alpha-D-glucosamine</name>
        <dbReference type="ChEBI" id="CHEBI:57705"/>
    </ligand>
</feature>
<feature type="binding site" evidence="15 16 18 20">
    <location>
        <begin position="332"/>
        <end position="335"/>
    </location>
    <ligand>
        <name>UDP-N-acetyl-alpha-D-glucosamine</name>
        <dbReference type="ChEBI" id="CHEBI:57705"/>
    </ligand>
</feature>
<feature type="glycosylation site" description="N-beta-linked (GlcNAc) arginine; by autocatalysis" evidence="7">
    <location>
        <position position="153"/>
    </location>
</feature>
<feature type="glycosylation site" description="N-beta-linked (GlcNAc) arginine; by autocatalysis" evidence="7">
    <location>
        <position position="184"/>
    </location>
</feature>
<feature type="glycosylation site" description="N-beta-linked (GlcNAc) arginine; by autocatalysis" evidence="7">
    <location>
        <position position="305"/>
    </location>
</feature>
<feature type="glycosylation site" description="N-beta-linked (GlcNAc) arginine; by autocatalysis" evidence="7">
    <location>
        <position position="335"/>
    </location>
</feature>
<feature type="mutagenesis site" description="Strongly reduced protein-arginine N-acetylglucosaminyltransferase activity, while retaining ability to inhibit the NF-kappa-B signaling." evidence="5">
    <original>Q</original>
    <variation>A</variation>
    <location>
        <position position="51"/>
    </location>
</feature>
<feature type="mutagenesis site" description="Abolished protein-arginine N-acetylglucosaminyltransferase activity." evidence="5">
    <original>W</original>
    <variation>A</variation>
    <location>
        <position position="52"/>
    </location>
</feature>
<feature type="mutagenesis site" description="Abolished localization to the host Golgi apparatus; when associated with A-234." evidence="8">
    <original>KER</original>
    <variation>AEA</variation>
    <location>
        <begin position="87"/>
        <end position="89"/>
    </location>
</feature>
<feature type="mutagenesis site" description="In 4RA; abolished auto-GlcNAcylation and reduced activity toward death domain-containing host target proteins; when associated with A-184, A-305 and A-335." evidence="7">
    <original>R</original>
    <variation>A</variation>
    <location>
        <position position="153"/>
    </location>
</feature>
<feature type="mutagenesis site" description="In 4RA; abolished auto-GlcNAcylation and reduced activity toward death domain-containing host target proteins; when associated with A-153, A-305 and A-335." evidence="7">
    <original>R</original>
    <variation>A</variation>
    <location>
        <position position="184"/>
    </location>
</feature>
<feature type="mutagenesis site" description="Abolished protein-arginine N-acetylglucosaminyltransferase activity." evidence="5">
    <original>Y</original>
    <variation>A</variation>
    <location>
        <position position="224"/>
    </location>
</feature>
<feature type="mutagenesis site" description="Abolished protein-arginine N-acetylglucosaminyltransferase activity." evidence="5 6 11">
    <original>DAD</original>
    <variation>AAA</variation>
    <location>
        <begin position="226"/>
        <end position="228"/>
    </location>
</feature>
<feature type="mutagenesis site" description="Abolished localization to the host Golgi apparatus; when associated with 87-A-A-89." evidence="8">
    <original>K</original>
    <variation>A</variation>
    <location>
        <position position="234"/>
    </location>
</feature>
<feature type="mutagenesis site" description="Does not affect protein-arginine N-acetylglucosaminyltransferase activity, while retaining ability to inhibit the NF-kappa-B signaling." evidence="5">
    <original>H</original>
    <variation>A</variation>
    <location>
        <position position="247"/>
    </location>
</feature>
<feature type="mutagenesis site" description="Does not affect protein-arginine N-acetylglucosaminyltransferase activity." evidence="5">
    <original>K</original>
    <variation>A</variation>
    <location>
        <position position="251"/>
    </location>
</feature>
<feature type="mutagenesis site" description="Abolished protein-arginine N-acetylglucosaminyltransferase activity." evidence="5">
    <original>E</original>
    <variation>A</variation>
    <variation>Q</variation>
    <location>
        <position position="258"/>
    </location>
</feature>
<feature type="mutagenesis site" description="Abolished protein-arginine N-acetylglucosaminyltransferase activity." evidence="5 6">
    <original>N</original>
    <variation>A</variation>
    <location>
        <position position="259"/>
    </location>
</feature>
<feature type="mutagenesis site" description="In 4RA; abolished auto-GlcNAcylation and reduced activity toward death domain-containing host target proteins; when associated with A-153, A-184 and A-335." evidence="7">
    <original>R</original>
    <variation>A</variation>
    <location>
        <position position="305"/>
    </location>
</feature>
<feature type="mutagenesis site" description="Abolished protein-arginine N-acetylglucosaminyltransferase activity." evidence="5">
    <original>W</original>
    <variation>A</variation>
    <location>
        <position position="334"/>
    </location>
</feature>
<feature type="mutagenesis site" description="Does not affect protein-arginine N-acetylglucosaminyltransferase activity, but impairs the GlcNAcylation pattern of host target proteins. In 4RA; abolished auto-GlcNAcylation and reduced activity toward death domain-containing host target proteins; when associated with A-153, A-184 and A-305." evidence="5 7">
    <original>R</original>
    <variation>A</variation>
    <location>
        <position position="335"/>
    </location>
</feature>
<name>SSEK3_SALTS</name>
<gene>
    <name evidence="12 13" type="primary">sseK3</name>
    <name evidence="17" type="ordered locus">SL1344_1928</name>
</gene>
<keyword id="KW-0002">3D-structure</keyword>
<keyword id="KW-0325">Glycoprotein</keyword>
<keyword id="KW-0328">Glycosyltransferase</keyword>
<keyword id="KW-1040">Host Golgi apparatus</keyword>
<keyword id="KW-0446">Lipid-binding</keyword>
<keyword id="KW-0464">Manganese</keyword>
<keyword id="KW-0479">Metal-binding</keyword>
<keyword id="KW-0964">Secreted</keyword>
<keyword id="KW-0800">Toxin</keyword>
<keyword id="KW-0808">Transferase</keyword>
<keyword id="KW-0843">Virulence</keyword>
<reference key="1">
    <citation type="journal article" date="2012" name="Proc. Natl. Acad. Sci. U.S.A.">
        <title>The transcriptional landscape and small RNAs of Salmonella enterica serovar Typhimurium.</title>
        <authorList>
            <person name="Kroger C."/>
            <person name="Dillon S.C."/>
            <person name="Cameron A.D."/>
            <person name="Papenfort K."/>
            <person name="Sivasankaran S.K."/>
            <person name="Hokamp K."/>
            <person name="Chao Y."/>
            <person name="Sittka A."/>
            <person name="Hebrard M."/>
            <person name="Handler K."/>
            <person name="Colgan A."/>
            <person name="Leekitcharoenphon P."/>
            <person name="Langridge G.C."/>
            <person name="Lohan A.J."/>
            <person name="Loftus B."/>
            <person name="Lucchini S."/>
            <person name="Ussery D.W."/>
            <person name="Dorman C.J."/>
            <person name="Thomson N.R."/>
            <person name="Vogel J."/>
            <person name="Hinton J.C."/>
        </authorList>
    </citation>
    <scope>NUCLEOTIDE SEQUENCE [LARGE SCALE GENOMIC DNA]</scope>
    <source>
        <strain>SL1344</strain>
    </source>
</reference>
<reference key="2">
    <citation type="journal article" date="2011" name="PLoS ONE">
        <title>Salmonella phage ST64B encodes a member of the SseK/NleB effector family.</title>
        <authorList>
            <person name="Brown N.F."/>
            <person name="Coombes B.K."/>
            <person name="Bishop J.L."/>
            <person name="Wickham M.E."/>
            <person name="Lowden M.J."/>
            <person name="Gal-Mor O."/>
            <person name="Goode D.L."/>
            <person name="Boyle E.C."/>
            <person name="Sanderson K.L."/>
            <person name="Finlay B.B."/>
        </authorList>
    </citation>
    <scope>SUBCELLULAR LOCATION</scope>
    <source>
        <strain>SL1344</strain>
    </source>
</reference>
<reference key="3">
    <citation type="journal article" date="2015" name="PLoS ONE">
        <title>SseK3 is a Salmonella effector that binds TRIM32 and modulates the host's NF-kappaB signalling activity.</title>
        <authorList>
            <person name="Yang Z."/>
            <person name="Soderholm A."/>
            <person name="Lung T.W."/>
            <person name="Giogha C."/>
            <person name="Hill M.M."/>
            <person name="Brown N.F."/>
            <person name="Hartland E."/>
            <person name="Teasdale R.D."/>
        </authorList>
    </citation>
    <scope>FUNCTION</scope>
    <scope>INTERACTION WITH HOST TRIM32</scope>
    <scope>SUBCELLULAR LOCATION</scope>
    <source>
        <strain>SL1344</strain>
    </source>
</reference>
<reference key="4">
    <citation type="journal article" date="2017" name="Infect. Immun.">
        <title>SseK1 and SseK3 type III secretion system effectors inhibit NF-kappaB signaling and necroptotic cell death in salmonella-infected macrophages.</title>
        <authorList>
            <person name="Guenster R.A."/>
            <person name="Matthews S.A."/>
            <person name="Holden D.W."/>
            <person name="Thurston T.L.M."/>
        </authorList>
    </citation>
    <scope>FUNCTION</scope>
    <scope>CATALYTIC ACTIVITY</scope>
    <scope>SUBCELLULAR LOCATION</scope>
</reference>
<reference key="5">
    <citation type="journal article" date="2017" name="J. Biol. Chem.">
        <title>NleB/SseK effectors from Citrobacter rodentium, Escherichia coli, and Salmonella enterica display distinct differences in host substrate specificity.</title>
        <authorList>
            <person name="El Qaidi S."/>
            <person name="Chen K."/>
            <person name="Halim A."/>
            <person name="Siukstaite L."/>
            <person name="Rueter C."/>
            <person name="Hurtado-Guerrero R."/>
            <person name="Clausen H."/>
            <person name="Hardwidge P.R."/>
        </authorList>
    </citation>
    <scope>FUNCTION</scope>
    <source>
        <strain>SL1344</strain>
    </source>
</reference>
<reference key="6">
    <citation type="journal article" date="2020" name="BMC Microbiol.">
        <title>Salmonella enterica serovar Typhimurium sseK3 induces apoptosis and enhances glycolysis in macrophages.</title>
        <authorList>
            <person name="Yu C."/>
            <person name="Du F."/>
            <person name="Zhang C."/>
            <person name="Li Y."/>
            <person name="Liao C."/>
            <person name="He L."/>
            <person name="Cheng X."/>
            <person name="Zhang X."/>
        </authorList>
    </citation>
    <scope>DISRUPTION PHENOTYPE</scope>
    <source>
        <strain>SL1344</strain>
    </source>
</reference>
<reference key="7">
    <citation type="journal article" date="2020" name="Commun. Biol.">
        <title>Arginine GlcNAcylation of Rab small GTPases by the pathogen Salmonella Typhimurium.</title>
        <authorList>
            <person name="Meng K."/>
            <person name="Zhuang X."/>
            <person name="Peng T."/>
            <person name="Hu S."/>
            <person name="Yang J."/>
            <person name="Wang Z."/>
            <person name="Fu J."/>
            <person name="Xue J."/>
            <person name="Pan X."/>
            <person name="Lv J."/>
            <person name="Liu X."/>
            <person name="Shao F."/>
            <person name="Li S."/>
        </authorList>
    </citation>
    <scope>FUNCTION</scope>
    <scope>CATALYTIC ACTIVITY</scope>
    <scope>SUBCELLULAR LOCATION</scope>
    <scope>MUTAGENESIS OF 87-LYS--ARG-89 AND LYS-234</scope>
    <source>
        <strain>SL1344</strain>
    </source>
</reference>
<reference key="8">
    <citation type="journal article" date="2020" name="Front. Cell. Infect. Microbiol.">
        <title>Auto arginine-GlcNAcylation is crucial for bacterial pathogens in regulating host cell death.</title>
        <authorList>
            <person name="Xue J."/>
            <person name="Pan X."/>
            <person name="Peng T."/>
            <person name="Duan M."/>
            <person name="Du L."/>
            <person name="Zhuang X."/>
            <person name="Cai X."/>
            <person name="Yi X."/>
            <person name="Fu Y."/>
            <person name="Li S."/>
        </authorList>
    </citation>
    <scope>FUNCTION</scope>
    <scope>CATALYTIC ACTIVITY</scope>
    <scope>SUBCELLULAR LOCATION</scope>
    <scope>AUTOGLYCOSYLATION</scope>
    <scope>GLYCOSYLATION AT ARG-153; ARG-184; ARG-305 AND ARG-335</scope>
    <scope>MUTAGENESIS OF ARG-153; ARG-184; ARG-305 AND ARG-335</scope>
    <source>
        <strain>SL1344</strain>
    </source>
</reference>
<reference key="9">
    <citation type="journal article" date="2020" name="Front. Cell. Infect. Microbiol.">
        <title>The Salmonella effector SseK3 targets small Rab GTPases.</title>
        <authorList>
            <person name="Gan J."/>
            <person name="Scott N.E."/>
            <person name="Newson J.P.M."/>
            <person name="Wibawa R.R."/>
            <person name="Wong Fok Lung T."/>
            <person name="Pollock G.L."/>
            <person name="Ng G.Z."/>
            <person name="van Driel I."/>
            <person name="Pearson J.S."/>
            <person name="Hartland E.L."/>
            <person name="Giogha C."/>
        </authorList>
    </citation>
    <scope>FUNCTION</scope>
    <scope>CATALYTIC ACTIVITY</scope>
    <scope>SUBCELLULAR LOCATION</scope>
    <scope>MUTAGENESIS OF 226-ASP--ASP-228</scope>
    <source>
        <strain>SL1344</strain>
    </source>
</reference>
<reference key="10">
    <citation type="journal article" date="2020" name="Front. Cell Dev. Biol.">
        <title>Arg-GlcNAcylation on TRADD by NleB and SseK1 is crucial for bacterial pathogenesis.</title>
        <authorList>
            <person name="Xue J."/>
            <person name="Hu S."/>
            <person name="Huang Y."/>
            <person name="Zhang Q."/>
            <person name="Yi X."/>
            <person name="Pan X."/>
            <person name="Li S."/>
        </authorList>
    </citation>
    <scope>FUNCTION</scope>
    <scope>CATALYTIC ACTIVITY</scope>
    <source>
        <strain>SL1344</strain>
    </source>
</reference>
<reference evidence="21 22" key="11">
    <citation type="journal article" date="2018" name="J. Biol. Chem.">
        <title>Structural basis for the glycosyltransferase activity of the Salmonella effector SseK3.</title>
        <authorList>
            <person name="Esposito D."/>
            <person name="Gunster R.A."/>
            <person name="Martino L."/>
            <person name="El Omari K."/>
            <person name="Wagner A."/>
            <person name="Thurston T.L.M."/>
            <person name="Rittinger K."/>
        </authorList>
    </citation>
    <scope>X-RAY CRYSTALLOGRAPHY (2.20 ANGSTROMS) OF 14-333 IN COMPLEX WITH URIDINE-5'-DIPHOSPHATE AND MANGANESE</scope>
    <scope>FUNCTION</scope>
    <scope>CATALYTIC ACTIVITY</scope>
    <scope>ACTIVE SITE</scope>
    <scope>COFACTOR</scope>
    <scope>DOMAIN</scope>
    <scope>MUTAGENESIS OF GLN-51; TRP-52; TYR-224; 226-ASP--ASP-228; HIS-247; LYS-251; GLU-258; ASN-259; TRP-334 AND ARG-335</scope>
</reference>
<reference evidence="19 20" key="12">
    <citation type="journal article" date="2019" name="Mol. Cell. Proteomics">
        <title>Salmonella effectors SseK1 and SseK3 target death domain proteins in the TNF and TRAIL signaling pathways.</title>
        <authorList>
            <person name="Newson J.P.M."/>
            <person name="Scott N.E."/>
            <person name="Yeuk Wah Chung I."/>
            <person name="Wong Fok Lung T."/>
            <person name="Giogha C."/>
            <person name="Gan J."/>
            <person name="Wang N."/>
            <person name="Strugnell R.A."/>
            <person name="Brown N.F."/>
            <person name="Cygler M."/>
            <person name="Pearson J.S."/>
            <person name="Hartland E.L."/>
        </authorList>
    </citation>
    <scope>X-RAY CRYSTALLOGRAPHY (2.30 ANGSTROMS) OF 25-335 IN COMPLEX WITH URIDINE-5'-DIPHOSPHATE AND MAGNESIUM</scope>
    <scope>FUNCTION</scope>
    <scope>CATALYTIC ACTIVITY</scope>
    <scope>MUTAGENESIS OF 226-ASP--ASP-228 AND GLU-258</scope>
    <scope>ACTIVE SITE</scope>
</reference>
<comment type="function">
    <text evidence="2 3 4 5 6 7 8 10 11">Protein-arginine N-acetylglucosaminyltransferase effector that disrupts TNF signaling in infected cells, including NF-kappa-B signaling and apoptosis (PubMed:26394407, PubMed:28069818, PubMed:28522607, PubMed:29449376, PubMed:32766249). Acts by catalyzing the transfer of a single N-acetylglucosamine (GlcNAc) to a conserved arginine residue in the death domain of host proteins such as TRADD, TNFRSF1A/TNFR1 and TNFRSF10B/TRAILR2: arginine GlcNAcylation prevents homotypic/heterotypic death domain interactions and assembly of the oligomeric TNF-alpha receptor complex, thereby disrupting TNF signaling (PubMed:28069818, PubMed:29449376, PubMed:30902834, PubMed:32766249). Also acts on host proteins without a death domain: catalyzes arginine GlcNAcylation of host small Rab GTPase (Rab1, Rab5 and Rab11), thereby preventing GTPase activity and leading to impaired host vesicular protein transport (PubMed:32504010, PubMed:32974215). Also mediates auto-GlcNAcylation, which is required for activity toward death domain-containing host target proteins (PubMed:32432056).</text>
</comment>
<comment type="catalytic activity">
    <reaction evidence="3 5 6 7 8 10 11">
        <text>L-arginyl-[protein] + UDP-N-acetyl-alpha-D-glucosamine = N(omega)-(N-acetyl-beta-D-glucosaminyl)-L-arginyl-[protein] + UDP + H(+)</text>
        <dbReference type="Rhea" id="RHEA:66632"/>
        <dbReference type="Rhea" id="RHEA-COMP:10532"/>
        <dbReference type="Rhea" id="RHEA-COMP:17079"/>
        <dbReference type="ChEBI" id="CHEBI:15378"/>
        <dbReference type="ChEBI" id="CHEBI:29965"/>
        <dbReference type="ChEBI" id="CHEBI:57705"/>
        <dbReference type="ChEBI" id="CHEBI:58223"/>
        <dbReference type="ChEBI" id="CHEBI:167322"/>
    </reaction>
    <physiologicalReaction direction="left-to-right" evidence="3 5 6 7 8 10 11">
        <dbReference type="Rhea" id="RHEA:66633"/>
    </physiologicalReaction>
</comment>
<comment type="cofactor">
    <cofactor evidence="5">
        <name>Mn(2+)</name>
        <dbReference type="ChEBI" id="CHEBI:29035"/>
    </cofactor>
</comment>
<comment type="subunit">
    <text evidence="2">Interacts with host TRIM32; without mediating its GlcNAcylation.</text>
</comment>
<comment type="subcellular location">
    <subcellularLocation>
        <location evidence="1">Secreted</location>
    </subcellularLocation>
    <subcellularLocation>
        <location evidence="2 7 8 11">Host Golgi apparatus</location>
    </subcellularLocation>
    <text evidence="1 8">Secreted via type III secretion system 2 (SPI-2 T3SS) (PubMed:21445262). Localizes to host Golgi apparatus via lipid-binding (PubMed:32504010).</text>
</comment>
<comment type="domain">
    <text evidence="15">Adopts a GT-A fold and acts as an inverting enzyme that converts the alpha-configuration in the UDP-N-acetyl-alpha-D-glucosamine donor to the beta configuration in the N-linked (GlcNAc) arginine product.</text>
</comment>
<comment type="PTM">
    <text evidence="7">Auto-glycosylated: arginine GlcNAcylation is required for activity toward death domain-containing host target proteins.</text>
</comment>
<comment type="disruption phenotype">
    <text evidence="9">Decreased apoptosis in infected macrophages, characterized by reduced CASP3, CASP8 ans CASP9 caspase activity.</text>
</comment>
<comment type="similarity">
    <text evidence="14">Belongs to the glycosyltransferase NleB family.</text>
</comment>
<accession>P0DUJ7</accession>
<evidence type="ECO:0000269" key="1">
    <source>
    </source>
</evidence>
<evidence type="ECO:0000269" key="2">
    <source>
    </source>
</evidence>
<evidence type="ECO:0000269" key="3">
    <source>
    </source>
</evidence>
<evidence type="ECO:0000269" key="4">
    <source>
    </source>
</evidence>
<evidence type="ECO:0000269" key="5">
    <source>
    </source>
</evidence>
<evidence type="ECO:0000269" key="6">
    <source>
    </source>
</evidence>
<evidence type="ECO:0000269" key="7">
    <source>
    </source>
</evidence>
<evidence type="ECO:0000269" key="8">
    <source>
    </source>
</evidence>
<evidence type="ECO:0000269" key="9">
    <source>
    </source>
</evidence>
<evidence type="ECO:0000269" key="10">
    <source>
    </source>
</evidence>
<evidence type="ECO:0000269" key="11">
    <source>
    </source>
</evidence>
<evidence type="ECO:0000303" key="12">
    <source>
    </source>
</evidence>
<evidence type="ECO:0000303" key="13">
    <source>
    </source>
</evidence>
<evidence type="ECO:0000305" key="14"/>
<evidence type="ECO:0000305" key="15">
    <source>
    </source>
</evidence>
<evidence type="ECO:0000305" key="16">
    <source>
    </source>
</evidence>
<evidence type="ECO:0000312" key="17">
    <source>
        <dbReference type="EMBL" id="CBW18025.1"/>
    </source>
</evidence>
<evidence type="ECO:0000312" key="18">
    <source>
        <dbReference type="PDB" id="6EYT"/>
    </source>
</evidence>
<evidence type="ECO:0007744" key="19">
    <source>
        <dbReference type="PDB" id="6CGI"/>
    </source>
</evidence>
<evidence type="ECO:0007744" key="20">
    <source>
        <dbReference type="PDB" id="6DUS"/>
    </source>
</evidence>
<evidence type="ECO:0007744" key="21">
    <source>
        <dbReference type="PDB" id="6EYR"/>
    </source>
</evidence>
<evidence type="ECO:0007744" key="22">
    <source>
        <dbReference type="PDB" id="6EYT"/>
    </source>
</evidence>
<proteinExistence type="evidence at protein level"/>